<dbReference type="EC" id="6.1.1.7" evidence="1"/>
<dbReference type="EMBL" id="CT978603">
    <property type="protein sequence ID" value="CAK29283.1"/>
    <property type="status" value="ALT_INIT"/>
    <property type="molecule type" value="Genomic_DNA"/>
</dbReference>
<dbReference type="SMR" id="A5GWM4"/>
<dbReference type="STRING" id="316278.SynRCC307_2380"/>
<dbReference type="KEGG" id="syr:SynRCC307_2380"/>
<dbReference type="eggNOG" id="COG0013">
    <property type="taxonomic scope" value="Bacteria"/>
</dbReference>
<dbReference type="HOGENOM" id="CLU_004485_1_0_3"/>
<dbReference type="OrthoDB" id="9803884at2"/>
<dbReference type="Proteomes" id="UP000001115">
    <property type="component" value="Chromosome"/>
</dbReference>
<dbReference type="GO" id="GO:0005829">
    <property type="term" value="C:cytosol"/>
    <property type="evidence" value="ECO:0007669"/>
    <property type="project" value="TreeGrafter"/>
</dbReference>
<dbReference type="GO" id="GO:0004813">
    <property type="term" value="F:alanine-tRNA ligase activity"/>
    <property type="evidence" value="ECO:0007669"/>
    <property type="project" value="UniProtKB-UniRule"/>
</dbReference>
<dbReference type="GO" id="GO:0002161">
    <property type="term" value="F:aminoacyl-tRNA deacylase activity"/>
    <property type="evidence" value="ECO:0007669"/>
    <property type="project" value="TreeGrafter"/>
</dbReference>
<dbReference type="GO" id="GO:0005524">
    <property type="term" value="F:ATP binding"/>
    <property type="evidence" value="ECO:0007669"/>
    <property type="project" value="UniProtKB-UniRule"/>
</dbReference>
<dbReference type="GO" id="GO:0000049">
    <property type="term" value="F:tRNA binding"/>
    <property type="evidence" value="ECO:0007669"/>
    <property type="project" value="UniProtKB-KW"/>
</dbReference>
<dbReference type="GO" id="GO:0008270">
    <property type="term" value="F:zinc ion binding"/>
    <property type="evidence" value="ECO:0007669"/>
    <property type="project" value="UniProtKB-UniRule"/>
</dbReference>
<dbReference type="GO" id="GO:0006419">
    <property type="term" value="P:alanyl-tRNA aminoacylation"/>
    <property type="evidence" value="ECO:0007669"/>
    <property type="project" value="UniProtKB-UniRule"/>
</dbReference>
<dbReference type="CDD" id="cd00673">
    <property type="entry name" value="AlaRS_core"/>
    <property type="match status" value="1"/>
</dbReference>
<dbReference type="FunFam" id="2.40.30.130:FF:000001">
    <property type="entry name" value="Alanine--tRNA ligase"/>
    <property type="match status" value="1"/>
</dbReference>
<dbReference type="FunFam" id="3.10.310.40:FF:000001">
    <property type="entry name" value="Alanine--tRNA ligase"/>
    <property type="match status" value="1"/>
</dbReference>
<dbReference type="FunFam" id="3.30.54.20:FF:000001">
    <property type="entry name" value="Alanine--tRNA ligase"/>
    <property type="match status" value="1"/>
</dbReference>
<dbReference type="FunFam" id="3.30.930.10:FF:000004">
    <property type="entry name" value="Alanine--tRNA ligase"/>
    <property type="match status" value="1"/>
</dbReference>
<dbReference type="FunFam" id="3.30.980.10:FF:000004">
    <property type="entry name" value="Alanine--tRNA ligase, cytoplasmic"/>
    <property type="match status" value="1"/>
</dbReference>
<dbReference type="Gene3D" id="2.40.30.130">
    <property type="match status" value="1"/>
</dbReference>
<dbReference type="Gene3D" id="3.10.310.40">
    <property type="match status" value="1"/>
</dbReference>
<dbReference type="Gene3D" id="3.30.54.20">
    <property type="match status" value="1"/>
</dbReference>
<dbReference type="Gene3D" id="6.10.250.550">
    <property type="match status" value="1"/>
</dbReference>
<dbReference type="Gene3D" id="3.30.930.10">
    <property type="entry name" value="Bira Bifunctional Protein, Domain 2"/>
    <property type="match status" value="1"/>
</dbReference>
<dbReference type="Gene3D" id="3.30.980.10">
    <property type="entry name" value="Threonyl-trna Synthetase, Chain A, domain 2"/>
    <property type="match status" value="1"/>
</dbReference>
<dbReference type="HAMAP" id="MF_00036_B">
    <property type="entry name" value="Ala_tRNA_synth_B"/>
    <property type="match status" value="1"/>
</dbReference>
<dbReference type="InterPro" id="IPR045864">
    <property type="entry name" value="aa-tRNA-synth_II/BPL/LPL"/>
</dbReference>
<dbReference type="InterPro" id="IPR002318">
    <property type="entry name" value="Ala-tRNA-lgiase_IIc"/>
</dbReference>
<dbReference type="InterPro" id="IPR018162">
    <property type="entry name" value="Ala-tRNA-ligase_IIc_anticod-bd"/>
</dbReference>
<dbReference type="InterPro" id="IPR018165">
    <property type="entry name" value="Ala-tRNA-synth_IIc_core"/>
</dbReference>
<dbReference type="InterPro" id="IPR018164">
    <property type="entry name" value="Ala-tRNA-synth_IIc_N"/>
</dbReference>
<dbReference type="InterPro" id="IPR050058">
    <property type="entry name" value="Ala-tRNA_ligase"/>
</dbReference>
<dbReference type="InterPro" id="IPR023033">
    <property type="entry name" value="Ala_tRNA_ligase_euk/bac"/>
</dbReference>
<dbReference type="InterPro" id="IPR003156">
    <property type="entry name" value="DHHA1_dom"/>
</dbReference>
<dbReference type="InterPro" id="IPR018163">
    <property type="entry name" value="Thr/Ala-tRNA-synth_IIc_edit"/>
</dbReference>
<dbReference type="InterPro" id="IPR009000">
    <property type="entry name" value="Transl_B-barrel_sf"/>
</dbReference>
<dbReference type="InterPro" id="IPR012947">
    <property type="entry name" value="tRNA_SAD"/>
</dbReference>
<dbReference type="NCBIfam" id="TIGR00344">
    <property type="entry name" value="alaS"/>
    <property type="match status" value="1"/>
</dbReference>
<dbReference type="PANTHER" id="PTHR11777:SF9">
    <property type="entry name" value="ALANINE--TRNA LIGASE, CYTOPLASMIC"/>
    <property type="match status" value="1"/>
</dbReference>
<dbReference type="PANTHER" id="PTHR11777">
    <property type="entry name" value="ALANYL-TRNA SYNTHETASE"/>
    <property type="match status" value="1"/>
</dbReference>
<dbReference type="Pfam" id="PF02272">
    <property type="entry name" value="DHHA1"/>
    <property type="match status" value="1"/>
</dbReference>
<dbReference type="Pfam" id="PF01411">
    <property type="entry name" value="tRNA-synt_2c"/>
    <property type="match status" value="1"/>
</dbReference>
<dbReference type="Pfam" id="PF07973">
    <property type="entry name" value="tRNA_SAD"/>
    <property type="match status" value="1"/>
</dbReference>
<dbReference type="PRINTS" id="PR00980">
    <property type="entry name" value="TRNASYNTHALA"/>
</dbReference>
<dbReference type="SMART" id="SM00863">
    <property type="entry name" value="tRNA_SAD"/>
    <property type="match status" value="1"/>
</dbReference>
<dbReference type="SUPFAM" id="SSF55681">
    <property type="entry name" value="Class II aaRS and biotin synthetases"/>
    <property type="match status" value="1"/>
</dbReference>
<dbReference type="SUPFAM" id="SSF101353">
    <property type="entry name" value="Putative anticodon-binding domain of alanyl-tRNA synthetase (AlaRS)"/>
    <property type="match status" value="1"/>
</dbReference>
<dbReference type="SUPFAM" id="SSF55186">
    <property type="entry name" value="ThrRS/AlaRS common domain"/>
    <property type="match status" value="1"/>
</dbReference>
<dbReference type="SUPFAM" id="SSF50447">
    <property type="entry name" value="Translation proteins"/>
    <property type="match status" value="1"/>
</dbReference>
<dbReference type="PROSITE" id="PS50860">
    <property type="entry name" value="AA_TRNA_LIGASE_II_ALA"/>
    <property type="match status" value="1"/>
</dbReference>
<evidence type="ECO:0000255" key="1">
    <source>
        <dbReference type="HAMAP-Rule" id="MF_00036"/>
    </source>
</evidence>
<evidence type="ECO:0000305" key="2"/>
<sequence>MAPAVARPRRGAEIRAAFLEFYESRGHQPIPSASLIPVDPTVLLTIAGMLPFKPVFLGQQERPAPRATSSQKCIRTNDIENVGRTARHHTFFEMLGNFSFGDYFKQQAIEWAWELSTEVFGLDPKNLVVSVFREDDEAEAIWRDVVGVNPKRIIRMDEADNFWASGPTGPCGPCSEIYYDFKPALGDEDIDLEDDSRFIEFYNLVFMQYSRDAEGTLTPLANKNIDTGLGLERMAQILQGVPNNYETDLIYPLIETAAGLAGVDYRQLDVKGQTSLKVIGDHSRAVTQLICDGVTASNLGRGYILRRLLRRVVRHGRLLGISKPFLVAMGEAAIALMQAAYPQLNERRELILAELQREEARFLETLERGEKLLADVLAAKPKQISGEQAFELYDTYGFPLELTEEIAEEHGLSVDLAGFEAAMEAQRQRAKAAAVSIDLTLQGAIEQMAADLEATAFRGYEALEHPSCVVALVVNGEPAQTASAGDAVQLVLDSTPFYGEGGGQVGDRGSLNGQDLIVSIESVNRQRDVSVHHGTIERGQLSVGDLVTAQVDPTCRRRAQAHHTATHLLQAALKQVVDSSISQAGSLVDFDRLRFDFHCPRAVTPAELEQLEALINGWITEAHSLEVQEMAIEAAKAAGAVAMFGEKYADVVRVVDVPGVSMELCGGTHVANTAEIGLFKIVSEAGVASGIRRIEAVAGPAVLAYLNERDVVVKQLSERFKVQPAEITARVAGLQEELKGATKALAAARSELAVAKAAALAAQAEAIGEHQLLVARLDGVDGGGLQSAAQGLADQLGDGAAVVLGGLPDPSDLGKVILVAAFGKAVVAKGQKAGQFIGGVAKLCGGGGGGRPNLAQAGGRDGAALDGALEQAKSSLQQELQG</sequence>
<name>SYA_SYNR3</name>
<gene>
    <name evidence="1" type="primary">alaS</name>
    <name type="ordered locus">SynRCC307_2380</name>
</gene>
<keyword id="KW-0030">Aminoacyl-tRNA synthetase</keyword>
<keyword id="KW-0067">ATP-binding</keyword>
<keyword id="KW-0963">Cytoplasm</keyword>
<keyword id="KW-0436">Ligase</keyword>
<keyword id="KW-0479">Metal-binding</keyword>
<keyword id="KW-0547">Nucleotide-binding</keyword>
<keyword id="KW-0648">Protein biosynthesis</keyword>
<keyword id="KW-1185">Reference proteome</keyword>
<keyword id="KW-0694">RNA-binding</keyword>
<keyword id="KW-0820">tRNA-binding</keyword>
<keyword id="KW-0862">Zinc</keyword>
<accession>A5GWM4</accession>
<comment type="function">
    <text evidence="1">Catalyzes the attachment of alanine to tRNA(Ala) in a two-step reaction: alanine is first activated by ATP to form Ala-AMP and then transferred to the acceptor end of tRNA(Ala). Also edits incorrectly charged Ser-tRNA(Ala) and Gly-tRNA(Ala) via its editing domain.</text>
</comment>
<comment type="catalytic activity">
    <reaction evidence="1">
        <text>tRNA(Ala) + L-alanine + ATP = L-alanyl-tRNA(Ala) + AMP + diphosphate</text>
        <dbReference type="Rhea" id="RHEA:12540"/>
        <dbReference type="Rhea" id="RHEA-COMP:9657"/>
        <dbReference type="Rhea" id="RHEA-COMP:9923"/>
        <dbReference type="ChEBI" id="CHEBI:30616"/>
        <dbReference type="ChEBI" id="CHEBI:33019"/>
        <dbReference type="ChEBI" id="CHEBI:57972"/>
        <dbReference type="ChEBI" id="CHEBI:78442"/>
        <dbReference type="ChEBI" id="CHEBI:78497"/>
        <dbReference type="ChEBI" id="CHEBI:456215"/>
        <dbReference type="EC" id="6.1.1.7"/>
    </reaction>
</comment>
<comment type="cofactor">
    <cofactor evidence="1">
        <name>Zn(2+)</name>
        <dbReference type="ChEBI" id="CHEBI:29105"/>
    </cofactor>
    <text evidence="1">Binds 1 zinc ion per subunit.</text>
</comment>
<comment type="subcellular location">
    <subcellularLocation>
        <location evidence="1">Cytoplasm</location>
    </subcellularLocation>
</comment>
<comment type="domain">
    <text evidence="1">Consists of three domains; the N-terminal catalytic domain, the editing domain and the C-terminal C-Ala domain. The editing domain removes incorrectly charged amino acids, while the C-Ala domain, along with tRNA(Ala), serves as a bridge to cooperatively bring together the editing and aminoacylation centers thus stimulating deacylation of misacylated tRNAs.</text>
</comment>
<comment type="similarity">
    <text evidence="1">Belongs to the class-II aminoacyl-tRNA synthetase family.</text>
</comment>
<comment type="sequence caution" evidence="2">
    <conflict type="erroneous initiation">
        <sequence resource="EMBL-CDS" id="CAK29283"/>
    </conflict>
</comment>
<protein>
    <recommendedName>
        <fullName evidence="1">Alanine--tRNA ligase</fullName>
        <ecNumber evidence="1">6.1.1.7</ecNumber>
    </recommendedName>
    <alternativeName>
        <fullName evidence="1">Alanyl-tRNA synthetase</fullName>
        <shortName evidence="1">AlaRS</shortName>
    </alternativeName>
</protein>
<feature type="chain" id="PRO_0000347842" description="Alanine--tRNA ligase">
    <location>
        <begin position="1"/>
        <end position="882"/>
    </location>
</feature>
<feature type="binding site" evidence="1">
    <location>
        <position position="563"/>
    </location>
    <ligand>
        <name>Zn(2+)</name>
        <dbReference type="ChEBI" id="CHEBI:29105"/>
    </ligand>
</feature>
<feature type="binding site" evidence="1">
    <location>
        <position position="567"/>
    </location>
    <ligand>
        <name>Zn(2+)</name>
        <dbReference type="ChEBI" id="CHEBI:29105"/>
    </ligand>
</feature>
<feature type="binding site" evidence="1">
    <location>
        <position position="665"/>
    </location>
    <ligand>
        <name>Zn(2+)</name>
        <dbReference type="ChEBI" id="CHEBI:29105"/>
    </ligand>
</feature>
<feature type="binding site" evidence="1">
    <location>
        <position position="669"/>
    </location>
    <ligand>
        <name>Zn(2+)</name>
        <dbReference type="ChEBI" id="CHEBI:29105"/>
    </ligand>
</feature>
<reference key="1">
    <citation type="submission" date="2006-05" db="EMBL/GenBank/DDBJ databases">
        <authorList>
            <consortium name="Genoscope"/>
        </authorList>
    </citation>
    <scope>NUCLEOTIDE SEQUENCE [LARGE SCALE GENOMIC DNA]</scope>
    <source>
        <strain>RCC307</strain>
    </source>
</reference>
<organism>
    <name type="scientific">Synechococcus sp. (strain RCC307)</name>
    <dbReference type="NCBI Taxonomy" id="316278"/>
    <lineage>
        <taxon>Bacteria</taxon>
        <taxon>Bacillati</taxon>
        <taxon>Cyanobacteriota</taxon>
        <taxon>Cyanophyceae</taxon>
        <taxon>Synechococcales</taxon>
        <taxon>Synechococcaceae</taxon>
        <taxon>Synechococcus</taxon>
    </lineage>
</organism>
<proteinExistence type="inferred from homology"/>